<accession>Q5M2K2</accession>
<comment type="catalytic activity">
    <reaction evidence="1">
        <text>L-citrulline + L-aspartate + ATP = 2-(N(omega)-L-arginino)succinate + AMP + diphosphate + H(+)</text>
        <dbReference type="Rhea" id="RHEA:10932"/>
        <dbReference type="ChEBI" id="CHEBI:15378"/>
        <dbReference type="ChEBI" id="CHEBI:29991"/>
        <dbReference type="ChEBI" id="CHEBI:30616"/>
        <dbReference type="ChEBI" id="CHEBI:33019"/>
        <dbReference type="ChEBI" id="CHEBI:57472"/>
        <dbReference type="ChEBI" id="CHEBI:57743"/>
        <dbReference type="ChEBI" id="CHEBI:456215"/>
        <dbReference type="EC" id="6.3.4.5"/>
    </reaction>
</comment>
<comment type="pathway">
    <text evidence="1">Amino-acid biosynthesis; L-arginine biosynthesis; L-arginine from L-ornithine and carbamoyl phosphate: step 2/3.</text>
</comment>
<comment type="subunit">
    <text evidence="1">Homotetramer.</text>
</comment>
<comment type="subcellular location">
    <subcellularLocation>
        <location evidence="1">Cytoplasm</location>
    </subcellularLocation>
</comment>
<comment type="similarity">
    <text evidence="1">Belongs to the argininosuccinate synthase family. Type 1 subfamily.</text>
</comment>
<comment type="sequence caution" evidence="2">
    <conflict type="erroneous initiation">
        <sequence resource="EMBL-CDS" id="AAV61412"/>
    </conflict>
</comment>
<protein>
    <recommendedName>
        <fullName evidence="1">Argininosuccinate synthase</fullName>
        <ecNumber evidence="1">6.3.4.5</ecNumber>
    </recommendedName>
    <alternativeName>
        <fullName evidence="1">Citrulline--aspartate ligase</fullName>
    </alternativeName>
</protein>
<evidence type="ECO:0000255" key="1">
    <source>
        <dbReference type="HAMAP-Rule" id="MF_00005"/>
    </source>
</evidence>
<evidence type="ECO:0000305" key="2"/>
<dbReference type="EC" id="6.3.4.5" evidence="1"/>
<dbReference type="EMBL" id="CP000023">
    <property type="protein sequence ID" value="AAV61412.1"/>
    <property type="status" value="ALT_INIT"/>
    <property type="molecule type" value="Genomic_DNA"/>
</dbReference>
<dbReference type="RefSeq" id="WP_002953531.1">
    <property type="nucleotide sequence ID" value="NC_006448.1"/>
</dbReference>
<dbReference type="SMR" id="Q5M2K2"/>
<dbReference type="STRING" id="264199.stu1813"/>
<dbReference type="KEGG" id="stl:stu1813"/>
<dbReference type="eggNOG" id="COG0137">
    <property type="taxonomic scope" value="Bacteria"/>
</dbReference>
<dbReference type="HOGENOM" id="CLU_032784_4_2_9"/>
<dbReference type="UniPathway" id="UPA00068">
    <property type="reaction ID" value="UER00113"/>
</dbReference>
<dbReference type="Proteomes" id="UP000001170">
    <property type="component" value="Chromosome"/>
</dbReference>
<dbReference type="GO" id="GO:0005737">
    <property type="term" value="C:cytoplasm"/>
    <property type="evidence" value="ECO:0007669"/>
    <property type="project" value="UniProtKB-SubCell"/>
</dbReference>
<dbReference type="GO" id="GO:0004055">
    <property type="term" value="F:argininosuccinate synthase activity"/>
    <property type="evidence" value="ECO:0007669"/>
    <property type="project" value="UniProtKB-UniRule"/>
</dbReference>
<dbReference type="GO" id="GO:0005524">
    <property type="term" value="F:ATP binding"/>
    <property type="evidence" value="ECO:0007669"/>
    <property type="project" value="UniProtKB-UniRule"/>
</dbReference>
<dbReference type="GO" id="GO:0000053">
    <property type="term" value="P:argininosuccinate metabolic process"/>
    <property type="evidence" value="ECO:0007669"/>
    <property type="project" value="TreeGrafter"/>
</dbReference>
<dbReference type="GO" id="GO:0006526">
    <property type="term" value="P:L-arginine biosynthetic process"/>
    <property type="evidence" value="ECO:0007669"/>
    <property type="project" value="UniProtKB-UniRule"/>
</dbReference>
<dbReference type="GO" id="GO:0000050">
    <property type="term" value="P:urea cycle"/>
    <property type="evidence" value="ECO:0007669"/>
    <property type="project" value="TreeGrafter"/>
</dbReference>
<dbReference type="CDD" id="cd01999">
    <property type="entry name" value="ASS"/>
    <property type="match status" value="1"/>
</dbReference>
<dbReference type="FunFam" id="1.20.5.470:FF:000002">
    <property type="entry name" value="Argininosuccinate synthase"/>
    <property type="match status" value="1"/>
</dbReference>
<dbReference type="FunFam" id="3.40.50.620:FF:000038">
    <property type="entry name" value="Argininosuccinate synthase"/>
    <property type="match status" value="1"/>
</dbReference>
<dbReference type="FunFam" id="3.90.1260.10:FF:000007">
    <property type="entry name" value="Argininosuccinate synthase"/>
    <property type="match status" value="1"/>
</dbReference>
<dbReference type="Gene3D" id="3.90.1260.10">
    <property type="entry name" value="Argininosuccinate synthetase, chain A, domain 2"/>
    <property type="match status" value="1"/>
</dbReference>
<dbReference type="Gene3D" id="3.40.50.620">
    <property type="entry name" value="HUPs"/>
    <property type="match status" value="1"/>
</dbReference>
<dbReference type="Gene3D" id="1.20.5.470">
    <property type="entry name" value="Single helix bin"/>
    <property type="match status" value="1"/>
</dbReference>
<dbReference type="HAMAP" id="MF_00005">
    <property type="entry name" value="Arg_succ_synth_type1"/>
    <property type="match status" value="1"/>
</dbReference>
<dbReference type="InterPro" id="IPR048268">
    <property type="entry name" value="Arginosuc_syn_C"/>
</dbReference>
<dbReference type="InterPro" id="IPR048267">
    <property type="entry name" value="Arginosuc_syn_N"/>
</dbReference>
<dbReference type="InterPro" id="IPR001518">
    <property type="entry name" value="Arginosuc_synth"/>
</dbReference>
<dbReference type="InterPro" id="IPR018223">
    <property type="entry name" value="Arginosuc_synth_CS"/>
</dbReference>
<dbReference type="InterPro" id="IPR023434">
    <property type="entry name" value="Arginosuc_synth_type_1_subfam"/>
</dbReference>
<dbReference type="InterPro" id="IPR024074">
    <property type="entry name" value="AS_cat/multimer_dom_body"/>
</dbReference>
<dbReference type="InterPro" id="IPR014729">
    <property type="entry name" value="Rossmann-like_a/b/a_fold"/>
</dbReference>
<dbReference type="NCBIfam" id="TIGR00032">
    <property type="entry name" value="argG"/>
    <property type="match status" value="1"/>
</dbReference>
<dbReference type="NCBIfam" id="NF001770">
    <property type="entry name" value="PRK00509.1"/>
    <property type="match status" value="1"/>
</dbReference>
<dbReference type="PANTHER" id="PTHR11587">
    <property type="entry name" value="ARGININOSUCCINATE SYNTHASE"/>
    <property type="match status" value="1"/>
</dbReference>
<dbReference type="PANTHER" id="PTHR11587:SF2">
    <property type="entry name" value="ARGININOSUCCINATE SYNTHASE"/>
    <property type="match status" value="1"/>
</dbReference>
<dbReference type="Pfam" id="PF20979">
    <property type="entry name" value="Arginosuc_syn_C"/>
    <property type="match status" value="1"/>
</dbReference>
<dbReference type="Pfam" id="PF00764">
    <property type="entry name" value="Arginosuc_synth"/>
    <property type="match status" value="1"/>
</dbReference>
<dbReference type="SUPFAM" id="SSF52402">
    <property type="entry name" value="Adenine nucleotide alpha hydrolases-like"/>
    <property type="match status" value="1"/>
</dbReference>
<dbReference type="SUPFAM" id="SSF69864">
    <property type="entry name" value="Argininosuccinate synthetase, C-terminal domain"/>
    <property type="match status" value="1"/>
</dbReference>
<dbReference type="PROSITE" id="PS00564">
    <property type="entry name" value="ARGININOSUCCIN_SYN_1"/>
    <property type="match status" value="1"/>
</dbReference>
<dbReference type="PROSITE" id="PS00565">
    <property type="entry name" value="ARGININOSUCCIN_SYN_2"/>
    <property type="match status" value="1"/>
</dbReference>
<name>ASSY_STRT2</name>
<feature type="chain" id="PRO_0000148650" description="Argininosuccinate synthase">
    <location>
        <begin position="1"/>
        <end position="399"/>
    </location>
</feature>
<feature type="binding site" evidence="1">
    <location>
        <begin position="9"/>
        <end position="17"/>
    </location>
    <ligand>
        <name>ATP</name>
        <dbReference type="ChEBI" id="CHEBI:30616"/>
    </ligand>
</feature>
<feature type="binding site" evidence="1">
    <location>
        <position position="85"/>
    </location>
    <ligand>
        <name>L-citrulline</name>
        <dbReference type="ChEBI" id="CHEBI:57743"/>
    </ligand>
</feature>
<feature type="binding site" evidence="1">
    <location>
        <position position="115"/>
    </location>
    <ligand>
        <name>ATP</name>
        <dbReference type="ChEBI" id="CHEBI:30616"/>
    </ligand>
</feature>
<feature type="binding site" evidence="1">
    <location>
        <position position="117"/>
    </location>
    <ligand>
        <name>L-aspartate</name>
        <dbReference type="ChEBI" id="CHEBI:29991"/>
    </ligand>
</feature>
<feature type="binding site" evidence="1">
    <location>
        <position position="121"/>
    </location>
    <ligand>
        <name>L-aspartate</name>
        <dbReference type="ChEBI" id="CHEBI:29991"/>
    </ligand>
</feature>
<feature type="binding site" evidence="1">
    <location>
        <position position="121"/>
    </location>
    <ligand>
        <name>L-citrulline</name>
        <dbReference type="ChEBI" id="CHEBI:57743"/>
    </ligand>
</feature>
<feature type="binding site" evidence="1">
    <location>
        <position position="122"/>
    </location>
    <ligand>
        <name>L-aspartate</name>
        <dbReference type="ChEBI" id="CHEBI:29991"/>
    </ligand>
</feature>
<feature type="binding site" evidence="1">
    <location>
        <position position="125"/>
    </location>
    <ligand>
        <name>L-citrulline</name>
        <dbReference type="ChEBI" id="CHEBI:57743"/>
    </ligand>
</feature>
<feature type="binding site" evidence="1">
    <location>
        <position position="173"/>
    </location>
    <ligand>
        <name>L-citrulline</name>
        <dbReference type="ChEBI" id="CHEBI:57743"/>
    </ligand>
</feature>
<feature type="binding site" evidence="1">
    <location>
        <position position="258"/>
    </location>
    <ligand>
        <name>L-citrulline</name>
        <dbReference type="ChEBI" id="CHEBI:57743"/>
    </ligand>
</feature>
<feature type="binding site" evidence="1">
    <location>
        <position position="270"/>
    </location>
    <ligand>
        <name>L-citrulline</name>
        <dbReference type="ChEBI" id="CHEBI:57743"/>
    </ligand>
</feature>
<proteinExistence type="inferred from homology"/>
<keyword id="KW-0028">Amino-acid biosynthesis</keyword>
<keyword id="KW-0055">Arginine biosynthesis</keyword>
<keyword id="KW-0067">ATP-binding</keyword>
<keyword id="KW-0963">Cytoplasm</keyword>
<keyword id="KW-0436">Ligase</keyword>
<keyword id="KW-0547">Nucleotide-binding</keyword>
<keyword id="KW-1185">Reference proteome</keyword>
<organism>
    <name type="scientific">Streptococcus thermophilus (strain ATCC BAA-250 / LMG 18311)</name>
    <dbReference type="NCBI Taxonomy" id="264199"/>
    <lineage>
        <taxon>Bacteria</taxon>
        <taxon>Bacillati</taxon>
        <taxon>Bacillota</taxon>
        <taxon>Bacilli</taxon>
        <taxon>Lactobacillales</taxon>
        <taxon>Streptococcaceae</taxon>
        <taxon>Streptococcus</taxon>
    </lineage>
</organism>
<reference key="1">
    <citation type="journal article" date="2004" name="Nat. Biotechnol.">
        <title>Complete sequence and comparative genome analysis of the dairy bacterium Streptococcus thermophilus.</title>
        <authorList>
            <person name="Bolotin A."/>
            <person name="Quinquis B."/>
            <person name="Renault P."/>
            <person name="Sorokin A."/>
            <person name="Ehrlich S.D."/>
            <person name="Kulakauskas S."/>
            <person name="Lapidus A."/>
            <person name="Goltsman E."/>
            <person name="Mazur M."/>
            <person name="Pusch G.D."/>
            <person name="Fonstein M."/>
            <person name="Overbeek R."/>
            <person name="Kyprides N."/>
            <person name="Purnelle B."/>
            <person name="Prozzi D."/>
            <person name="Ngui K."/>
            <person name="Masuy D."/>
            <person name="Hancy F."/>
            <person name="Burteau S."/>
            <person name="Boutry M."/>
            <person name="Delcour J."/>
            <person name="Goffeau A."/>
            <person name="Hols P."/>
        </authorList>
    </citation>
    <scope>NUCLEOTIDE SEQUENCE [LARGE SCALE GENOMIC DNA]</scope>
    <source>
        <strain>ATCC BAA-250 / LMG 18311</strain>
    </source>
</reference>
<sequence length="399" mass="44055">MSKEKVILAYSGGLDTSVAITWLKKDYDVIAVCMDVGEGKDLEFIHDKALTVGAVESYVLDVKDEFAEDYVLPALQAHAYYEQKYPLVSALSRPIIAKKLVEIAHKTGATTIAHGCTGKGNDQVRFEVAIAALDPSLKVVAPVREWKWSREEEIEYAKANGVPVPADLDNPYSVDQNLWGRANECGVLENPWNQAPEEAFGITNSPESAPDEAEYVDVTFKEGKPVALNGKEMKLADLIQEMNVIAGKHGVGRIDHVENRLVGIKSREIYECPGAIALLTAHKEIEDLTLVREVSHFKPILENELSNLIYNALWFSPATEAIIAYIKETQKVVNGIAKVKLYKGHAQVVARQSANSLYDENLATYTSADSFDQDAAIGFIKLWGLPTQVNSQVNHPFDK</sequence>
<gene>
    <name evidence="1" type="primary">argG</name>
    <name type="ordered locus">stu1813</name>
</gene>